<gene>
    <name evidence="7" type="primary">nscC</name>
    <name type="ORF">TEQG_05348</name>
</gene>
<protein>
    <recommendedName>
        <fullName evidence="7">FAD-dependent monooxygenase nscC</fullName>
        <ecNumber evidence="9">1.-.-.-</ecNumber>
    </recommendedName>
    <alternativeName>
        <fullName evidence="7">Neosartoricin B biosynthesis protein C</fullName>
    </alternativeName>
</protein>
<comment type="function">
    <text evidence="1 3 6">FAD-dependent monooxygenase; part of the gene cluster that mediates the biosynthesis of neosartoricin B, a prenylated anthracenone that probably exhibits T-cell antiproliferative activity, suggestive of a physiological role as an immunosuppressive agent (PubMed:23758576). The non-reducing polyketide synthase nscA probably synthesizes and cyclizes the decaketide backbone (By similarity). The hydrolase nscB then mediates the product release through hydrolysis followed by spontaneous decarboxylation (By similarity). The prenyltransferase nscD catalyzes the addition of the dimethylallyl group to the aromatic C5 (By similarity). The FAD-dependent monooxygenase nscC is then responsible for the stereospecific hydroxylation at C2 (By similarity). Neosartoricin B can be converted into two additional compounds neosartoricins C and D (By similarity). Neosartoricin C is a spirocyclic compound that is cyclized through the attack of C3 hydroxyl on C14, followed by dehydration (By similarity). On the other hand, neosartoricin D is a further cyclized compound in which attack of C2 on C14 in neosartoricin C results in the formation of the acetal-containing dioxabicyclo-octanone ring (By similarity). Both of these compounds are novel and possibly represent related metabolites of the gene cluster (By similarity).</text>
</comment>
<comment type="cofactor">
    <cofactor evidence="8">
        <name>FAD</name>
        <dbReference type="ChEBI" id="CHEBI:57692"/>
    </cofactor>
</comment>
<comment type="pathway">
    <text evidence="9">Secondary metabolite biosynthesis.</text>
</comment>
<comment type="similarity">
    <text evidence="8">Belongs to the paxM FAD-dependent monooxygenase family.</text>
</comment>
<sequence>MGKQQETILIIGAGISGLATSRLLTNNGIPNIVFEASTPDRSQGFAISLQEFGYSTLLAALGDLPLSSLIRAVAPDRQIGGTGWIDQALRDNRTGELLVAPDLTTTKQTIVRANRNALRHWIADCGEDELDVRYGHKLQSIKGKLGDVTAIFENGAKYKGSLIIAADGVNSTYSPRRGS</sequence>
<organism>
    <name type="scientific">Trichophyton equinum (strain ATCC MYA-4606 / CBS 127.97)</name>
    <name type="common">Horse ringworm fungus</name>
    <dbReference type="NCBI Taxonomy" id="559882"/>
    <lineage>
        <taxon>Eukaryota</taxon>
        <taxon>Fungi</taxon>
        <taxon>Dikarya</taxon>
        <taxon>Ascomycota</taxon>
        <taxon>Pezizomycotina</taxon>
        <taxon>Eurotiomycetes</taxon>
        <taxon>Eurotiomycetidae</taxon>
        <taxon>Onygenales</taxon>
        <taxon>Arthrodermataceae</taxon>
        <taxon>Trichophyton</taxon>
    </lineage>
</organism>
<accession>F2PWS7</accession>
<evidence type="ECO:0000250" key="1">
    <source>
        <dbReference type="UniProtKB" id="A1D8J0"/>
    </source>
</evidence>
<evidence type="ECO:0000250" key="2">
    <source>
        <dbReference type="UniProtKB" id="B8M9J8"/>
    </source>
</evidence>
<evidence type="ECO:0000250" key="3">
    <source>
        <dbReference type="UniProtKB" id="F2S701"/>
    </source>
</evidence>
<evidence type="ECO:0000255" key="4"/>
<evidence type="ECO:0000255" key="5">
    <source>
        <dbReference type="PROSITE-ProRule" id="PRU00498"/>
    </source>
</evidence>
<evidence type="ECO:0000269" key="6">
    <source>
    </source>
</evidence>
<evidence type="ECO:0000303" key="7">
    <source>
    </source>
</evidence>
<evidence type="ECO:0000305" key="8"/>
<evidence type="ECO:0000305" key="9">
    <source>
    </source>
</evidence>
<feature type="signal peptide" evidence="4">
    <location>
        <begin position="1"/>
        <end position="21"/>
    </location>
</feature>
<feature type="chain" id="PRO_0000437909" description="FAD-dependent monooxygenase nscC">
    <location>
        <begin position="22"/>
        <end position="179"/>
    </location>
</feature>
<feature type="binding site" evidence="2">
    <location>
        <position position="35"/>
    </location>
    <ligand>
        <name>FAD</name>
        <dbReference type="ChEBI" id="CHEBI:57692"/>
    </ligand>
</feature>
<feature type="binding site" evidence="2">
    <location>
        <position position="46"/>
    </location>
    <ligand>
        <name>FAD</name>
        <dbReference type="ChEBI" id="CHEBI:57692"/>
    </ligand>
</feature>
<feature type="binding site" evidence="2">
    <location>
        <position position="119"/>
    </location>
    <ligand>
        <name>FAD</name>
        <dbReference type="ChEBI" id="CHEBI:57692"/>
    </ligand>
</feature>
<feature type="glycosylation site" description="N-linked (GlcNAc...) asparagine" evidence="5">
    <location>
        <position position="92"/>
    </location>
</feature>
<feature type="glycosylation site" description="N-linked (GlcNAc...) asparagine" evidence="5">
    <location>
        <position position="170"/>
    </location>
</feature>
<proteinExistence type="inferred from homology"/>
<dbReference type="EC" id="1.-.-.-" evidence="9"/>
<dbReference type="EMBL" id="DS995747">
    <property type="protein sequence ID" value="EGE06345.1"/>
    <property type="molecule type" value="Genomic_DNA"/>
</dbReference>
<dbReference type="SMR" id="F2PWS7"/>
<dbReference type="GlyCosmos" id="F2PWS7">
    <property type="glycosylation" value="2 sites, No reported glycans"/>
</dbReference>
<dbReference type="VEuPathDB" id="FungiDB:TEQG_05348"/>
<dbReference type="eggNOG" id="ENOG502SIVG">
    <property type="taxonomic scope" value="Eukaryota"/>
</dbReference>
<dbReference type="HOGENOM" id="CLU_1504514_0_0_1"/>
<dbReference type="OrthoDB" id="4603at34384"/>
<dbReference type="Proteomes" id="UP000009169">
    <property type="component" value="Unassembled WGS sequence"/>
</dbReference>
<dbReference type="GO" id="GO:0071949">
    <property type="term" value="F:FAD binding"/>
    <property type="evidence" value="ECO:0007669"/>
    <property type="project" value="InterPro"/>
</dbReference>
<dbReference type="GO" id="GO:0004497">
    <property type="term" value="F:monooxygenase activity"/>
    <property type="evidence" value="ECO:0007669"/>
    <property type="project" value="UniProtKB-KW"/>
</dbReference>
<dbReference type="Gene3D" id="3.50.50.60">
    <property type="entry name" value="FAD/NAD(P)-binding domain"/>
    <property type="match status" value="1"/>
</dbReference>
<dbReference type="InterPro" id="IPR002938">
    <property type="entry name" value="FAD-bd"/>
</dbReference>
<dbReference type="InterPro" id="IPR036188">
    <property type="entry name" value="FAD/NAD-bd_sf"/>
</dbReference>
<dbReference type="PANTHER" id="PTHR47178:SF4">
    <property type="entry name" value="FAD-DEPENDENT MONOOXYGENASE APTC"/>
    <property type="match status" value="1"/>
</dbReference>
<dbReference type="PANTHER" id="PTHR47178">
    <property type="entry name" value="MONOOXYGENASE, FAD-BINDING"/>
    <property type="match status" value="1"/>
</dbReference>
<dbReference type="Pfam" id="PF01494">
    <property type="entry name" value="FAD_binding_3"/>
    <property type="match status" value="1"/>
</dbReference>
<dbReference type="PRINTS" id="PR00420">
    <property type="entry name" value="RNGMNOXGNASE"/>
</dbReference>
<dbReference type="SUPFAM" id="SSF51905">
    <property type="entry name" value="FAD/NAD(P)-binding domain"/>
    <property type="match status" value="1"/>
</dbReference>
<name>NSCC_TRIEC</name>
<reference key="1">
    <citation type="journal article" date="2012" name="MBio">
        <title>Comparative genome analysis of Trichophyton rubrum and related dermatophytes reveals candidate genes involved in infection.</title>
        <authorList>
            <person name="Martinez D.A."/>
            <person name="Oliver B.G."/>
            <person name="Graeser Y."/>
            <person name="Goldberg J.M."/>
            <person name="Li W."/>
            <person name="Martinez-Rossi N.M."/>
            <person name="Monod M."/>
            <person name="Shelest E."/>
            <person name="Barton R.C."/>
            <person name="Birch E."/>
            <person name="Brakhage A.A."/>
            <person name="Chen Z."/>
            <person name="Gurr S.J."/>
            <person name="Heiman D."/>
            <person name="Heitman J."/>
            <person name="Kosti I."/>
            <person name="Rossi A."/>
            <person name="Saif S."/>
            <person name="Samalova M."/>
            <person name="Saunders C.W."/>
            <person name="Shea T."/>
            <person name="Summerbell R.C."/>
            <person name="Xu J."/>
            <person name="Young S."/>
            <person name="Zeng Q."/>
            <person name="Birren B.W."/>
            <person name="Cuomo C.A."/>
            <person name="White T.C."/>
        </authorList>
    </citation>
    <scope>NUCLEOTIDE SEQUENCE [LARGE SCALE GENOMIC DNA]</scope>
    <source>
        <strain>ATCC MYA-4606 / CBS 127.97</strain>
    </source>
</reference>
<reference key="2">
    <citation type="journal article" date="2013" name="ACS Synth. Biol.">
        <title>Discovery of cryptic polyketide metabolites from dermatophytes using heterologous expression in Aspergillus nidulans.</title>
        <authorList>
            <person name="Yin W.B."/>
            <person name="Chooi Y.H."/>
            <person name="Smith A.R."/>
            <person name="Cacho R.A."/>
            <person name="Hu Y."/>
            <person name="White T.C."/>
            <person name="Tang Y."/>
        </authorList>
    </citation>
    <scope>FUNCTION</scope>
</reference>
<keyword id="KW-0274">FAD</keyword>
<keyword id="KW-0285">Flavoprotein</keyword>
<keyword id="KW-0325">Glycoprotein</keyword>
<keyword id="KW-0503">Monooxygenase</keyword>
<keyword id="KW-0560">Oxidoreductase</keyword>
<keyword id="KW-0732">Signal</keyword>